<feature type="chain" id="PRO_0000193517" description="Lysozyme g">
    <location>
        <begin position="1"/>
        <end position="185"/>
    </location>
</feature>
<feature type="active site" evidence="1">
    <location>
        <position position="73"/>
    </location>
</feature>
<name>LYG_CYPCA</name>
<dbReference type="EC" id="3.2.1.17"/>
<dbReference type="EMBL" id="AB084624">
    <property type="protein sequence ID" value="BAB91437.1"/>
    <property type="molecule type" value="mRNA"/>
</dbReference>
<dbReference type="SMR" id="Q8JFR1"/>
<dbReference type="CAZy" id="GH23">
    <property type="family name" value="Glycoside Hydrolase Family 23"/>
</dbReference>
<dbReference type="Proteomes" id="UP000694384">
    <property type="component" value="Unplaced"/>
</dbReference>
<dbReference type="Proteomes" id="UP000694427">
    <property type="component" value="Unplaced"/>
</dbReference>
<dbReference type="Proteomes" id="UP000694700">
    <property type="component" value="Unplaced"/>
</dbReference>
<dbReference type="Proteomes" id="UP000694701">
    <property type="component" value="Unplaced"/>
</dbReference>
<dbReference type="Proteomes" id="UP001155660">
    <property type="component" value="Unplaced"/>
</dbReference>
<dbReference type="GO" id="GO:0005576">
    <property type="term" value="C:extracellular region"/>
    <property type="evidence" value="ECO:0007669"/>
    <property type="project" value="TreeGrafter"/>
</dbReference>
<dbReference type="GO" id="GO:0003796">
    <property type="term" value="F:lysozyme activity"/>
    <property type="evidence" value="ECO:0007669"/>
    <property type="project" value="UniProtKB-EC"/>
</dbReference>
<dbReference type="GO" id="GO:0050830">
    <property type="term" value="P:defense response to Gram-positive bacterium"/>
    <property type="evidence" value="ECO:0007669"/>
    <property type="project" value="TreeGrafter"/>
</dbReference>
<dbReference type="GO" id="GO:0031640">
    <property type="term" value="P:killing of cells of another organism"/>
    <property type="evidence" value="ECO:0007669"/>
    <property type="project" value="UniProtKB-KW"/>
</dbReference>
<dbReference type="GO" id="GO:0009253">
    <property type="term" value="P:peptidoglycan catabolic process"/>
    <property type="evidence" value="ECO:0007669"/>
    <property type="project" value="InterPro"/>
</dbReference>
<dbReference type="CDD" id="cd01021">
    <property type="entry name" value="GEWL"/>
    <property type="match status" value="1"/>
</dbReference>
<dbReference type="FunFam" id="1.10.530.10:FF:000026">
    <property type="entry name" value="Lysozyme g"/>
    <property type="match status" value="1"/>
</dbReference>
<dbReference type="Gene3D" id="1.10.530.10">
    <property type="match status" value="1"/>
</dbReference>
<dbReference type="InterPro" id="IPR002152">
    <property type="entry name" value="Glyco_hydro_23"/>
</dbReference>
<dbReference type="InterPro" id="IPR023346">
    <property type="entry name" value="Lysozyme-like_dom_sf"/>
</dbReference>
<dbReference type="PANTHER" id="PTHR31698">
    <property type="entry name" value="LYSOZYME G FAMILY MEMBER"/>
    <property type="match status" value="1"/>
</dbReference>
<dbReference type="PANTHER" id="PTHR31698:SF8">
    <property type="entry name" value="LYSOZYME G-RELATED"/>
    <property type="match status" value="1"/>
</dbReference>
<dbReference type="PIRSF" id="PIRSF001065">
    <property type="entry name" value="Lysozyme_g"/>
    <property type="match status" value="1"/>
</dbReference>
<dbReference type="PRINTS" id="PR00749">
    <property type="entry name" value="LYSOZYMEG"/>
</dbReference>
<dbReference type="SUPFAM" id="SSF53955">
    <property type="entry name" value="Lysozyme-like"/>
    <property type="match status" value="1"/>
</dbReference>
<keyword id="KW-0929">Antimicrobial</keyword>
<keyword id="KW-0081">Bacteriolytic enzyme</keyword>
<keyword id="KW-0326">Glycosidase</keyword>
<keyword id="KW-0378">Hydrolase</keyword>
<keyword id="KW-1185">Reference proteome</keyword>
<evidence type="ECO:0000250" key="1"/>
<evidence type="ECO:0000305" key="2"/>
<comment type="catalytic activity">
    <reaction>
        <text>Hydrolysis of (1-&gt;4)-beta-linkages between N-acetylmuramic acid and N-acetyl-D-glucosamine residues in a peptidoglycan and between N-acetyl-D-glucosamine residues in chitodextrins.</text>
        <dbReference type="EC" id="3.2.1.17"/>
    </reaction>
</comment>
<comment type="similarity">
    <text evidence="2">Belongs to the glycosyl hydrolase 23 family.</text>
</comment>
<protein>
    <recommendedName>
        <fullName>Lysozyme g</fullName>
        <ecNumber>3.2.1.17</ecNumber>
    </recommendedName>
    <alternativeName>
        <fullName>1,4-beta-N-acetylmuramidase</fullName>
    </alternativeName>
</protein>
<accession>Q8JFR1</accession>
<proteinExistence type="evidence at transcript level"/>
<sequence length="185" mass="20381">MAYIYGDTMKIDTTGASEATAKQDKLTIKGVEAPKKLAEHDLARGEKYKNMITKVGKAKKMDPAVIAAMISRESRAGAVLKNGWEPAGNGFGLMQVDKRSHTPVGAWDSEQHVTQATEILIGFIKEIKVNFPKWTQEQCFKGGIAAYNKGVSRVTSYENIDVKTTGLDYSSDVVARAQWFRSKGY</sequence>
<organism>
    <name type="scientific">Cyprinus carpio</name>
    <name type="common">Common carp</name>
    <dbReference type="NCBI Taxonomy" id="7962"/>
    <lineage>
        <taxon>Eukaryota</taxon>
        <taxon>Metazoa</taxon>
        <taxon>Chordata</taxon>
        <taxon>Craniata</taxon>
        <taxon>Vertebrata</taxon>
        <taxon>Euteleostomi</taxon>
        <taxon>Actinopterygii</taxon>
        <taxon>Neopterygii</taxon>
        <taxon>Teleostei</taxon>
        <taxon>Ostariophysi</taxon>
        <taxon>Cypriniformes</taxon>
        <taxon>Cyprinidae</taxon>
        <taxon>Cyprininae</taxon>
        <taxon>Cyprinus</taxon>
    </lineage>
</organism>
<reference key="1">
    <citation type="journal article" date="2003" name="Fish Shellfish Immunol.">
        <title>Molecular cloning of G type lysozyme cDNA in common carp (Cyprinus carpio L.).</title>
        <authorList>
            <person name="Savan R."/>
            <person name="Aman A."/>
            <person name="Sakai M."/>
        </authorList>
    </citation>
    <scope>NUCLEOTIDE SEQUENCE [MRNA]</scope>
    <source>
        <tissue>Kidney</tissue>
    </source>
</reference>